<sequence>MAIQPLRLDPITVLGKQLVIELFDCVDQRFDDIQWIEESMLEAARQANATIITSAFHKFSPIGISGVVVIAESHLAIHTWPEYGYAAVDVFTCGDVLDGAQAVRVLSERLGSRRHLISSMDRGLGGHRLGLLSRSLAGNGPVDEDSPTLRWALGQGTGVA</sequence>
<comment type="function">
    <text evidence="1">Catalyzes the decarboxylation of S-adenosylmethionine to S-adenosylmethioninamine (dcAdoMet), the propylamine donor required for the synthesis of the polyamines spermine and spermidine from the diamine putrescine.</text>
</comment>
<comment type="catalytic activity">
    <reaction evidence="1">
        <text>S-adenosyl-L-methionine + H(+) = S-adenosyl 3-(methylsulfanyl)propylamine + CO2</text>
        <dbReference type="Rhea" id="RHEA:15981"/>
        <dbReference type="ChEBI" id="CHEBI:15378"/>
        <dbReference type="ChEBI" id="CHEBI:16526"/>
        <dbReference type="ChEBI" id="CHEBI:57443"/>
        <dbReference type="ChEBI" id="CHEBI:59789"/>
        <dbReference type="EC" id="4.1.1.50"/>
    </reaction>
</comment>
<comment type="cofactor">
    <cofactor evidence="1">
        <name>pyruvate</name>
        <dbReference type="ChEBI" id="CHEBI:15361"/>
    </cofactor>
    <text evidence="1">Binds 1 pyruvoyl group covalently per subunit.</text>
</comment>
<comment type="pathway">
    <text evidence="1">Amine and polyamine biosynthesis; S-adenosylmethioninamine biosynthesis; S-adenosylmethioninamine from S-adenosyl-L-methionine: step 1/1.</text>
</comment>
<comment type="subunit">
    <text evidence="1">Heterotetramer of two alpha and two beta chains arranged as a dimer of alpha/beta heterodimers.</text>
</comment>
<comment type="PTM">
    <text evidence="1">Is synthesized initially as an inactive proenzyme. Formation of the active enzyme involves a self-maturation process in which the active site pyruvoyl group is generated from an internal serine residue via an autocatalytic post-translational modification. Two non-identical subunits are generated from the proenzyme in this reaction, and the pyruvate is formed at the N-terminus of the alpha chain, which is derived from the carboxyl end of the proenzyme. The post-translation cleavage follows an unusual pathway, termed non-hydrolytic serinolysis, in which the side chain hydroxyl group of the serine supplies its oxygen atom to form the C-terminus of the beta chain, while the remainder of the serine residue undergoes an oxidative deamination to produce ammonia and the pyruvoyl group blocking the N-terminus of the alpha chain.</text>
</comment>
<comment type="similarity">
    <text evidence="1">Belongs to the prokaryotic AdoMetDC family. Type 1 subfamily.</text>
</comment>
<reference key="1">
    <citation type="journal article" date="2009" name="Genome Res.">
        <title>Newly introduced genomic prophage islands are critical determinants of in vivo competitiveness in the Liverpool epidemic strain of Pseudomonas aeruginosa.</title>
        <authorList>
            <person name="Winstanley C."/>
            <person name="Langille M.G.I."/>
            <person name="Fothergill J.L."/>
            <person name="Kukavica-Ibrulj I."/>
            <person name="Paradis-Bleau C."/>
            <person name="Sanschagrin F."/>
            <person name="Thomson N.R."/>
            <person name="Winsor G.L."/>
            <person name="Quail M.A."/>
            <person name="Lennard N."/>
            <person name="Bignell A."/>
            <person name="Clarke L."/>
            <person name="Seeger K."/>
            <person name="Saunders D."/>
            <person name="Harris D."/>
            <person name="Parkhill J."/>
            <person name="Hancock R.E.W."/>
            <person name="Brinkman F.S.L."/>
            <person name="Levesque R.C."/>
        </authorList>
    </citation>
    <scope>NUCLEOTIDE SEQUENCE [LARGE SCALE GENOMIC DNA]</scope>
    <source>
        <strain>LESB58</strain>
    </source>
</reference>
<organism>
    <name type="scientific">Pseudomonas aeruginosa (strain LESB58)</name>
    <dbReference type="NCBI Taxonomy" id="557722"/>
    <lineage>
        <taxon>Bacteria</taxon>
        <taxon>Pseudomonadati</taxon>
        <taxon>Pseudomonadota</taxon>
        <taxon>Gammaproteobacteria</taxon>
        <taxon>Pseudomonadales</taxon>
        <taxon>Pseudomonadaceae</taxon>
        <taxon>Pseudomonas</taxon>
    </lineage>
</organism>
<protein>
    <recommendedName>
        <fullName evidence="1">S-adenosylmethionine decarboxylase proenzyme</fullName>
        <shortName evidence="1">AdoMetDC</shortName>
        <shortName evidence="1">SAMDC</shortName>
        <ecNumber evidence="1">4.1.1.50</ecNumber>
    </recommendedName>
    <component>
        <recommendedName>
            <fullName evidence="1">S-adenosylmethionine decarboxylase beta chain</fullName>
        </recommendedName>
    </component>
    <component>
        <recommendedName>
            <fullName evidence="1">S-adenosylmethionine decarboxylase alpha chain</fullName>
        </recommendedName>
    </component>
</protein>
<name>SPEH_PSEA8</name>
<gene>
    <name evidence="1" type="primary">speH</name>
    <name type="ordered locus">PLES_51581</name>
</gene>
<dbReference type="EC" id="4.1.1.50" evidence="1"/>
<dbReference type="EMBL" id="FM209186">
    <property type="protein sequence ID" value="CAW29912.1"/>
    <property type="molecule type" value="Genomic_DNA"/>
</dbReference>
<dbReference type="SMR" id="B7V1I5"/>
<dbReference type="KEGG" id="pag:PLES_51581"/>
<dbReference type="HOGENOM" id="CLU_125470_2_3_6"/>
<dbReference type="UniPathway" id="UPA00331">
    <property type="reaction ID" value="UER00451"/>
</dbReference>
<dbReference type="GO" id="GO:0005829">
    <property type="term" value="C:cytosol"/>
    <property type="evidence" value="ECO:0007669"/>
    <property type="project" value="TreeGrafter"/>
</dbReference>
<dbReference type="GO" id="GO:0004014">
    <property type="term" value="F:adenosylmethionine decarboxylase activity"/>
    <property type="evidence" value="ECO:0007669"/>
    <property type="project" value="UniProtKB-UniRule"/>
</dbReference>
<dbReference type="GO" id="GO:0008295">
    <property type="term" value="P:spermidine biosynthetic process"/>
    <property type="evidence" value="ECO:0007669"/>
    <property type="project" value="UniProtKB-UniRule"/>
</dbReference>
<dbReference type="FunFam" id="3.60.90.10:FF:000013">
    <property type="entry name" value="S-adenosylmethionine decarboxylase proenzyme"/>
    <property type="match status" value="1"/>
</dbReference>
<dbReference type="Gene3D" id="3.60.90.10">
    <property type="entry name" value="S-adenosylmethionine decarboxylase"/>
    <property type="match status" value="1"/>
</dbReference>
<dbReference type="HAMAP" id="MF_00464">
    <property type="entry name" value="AdoMetDC_1"/>
    <property type="match status" value="1"/>
</dbReference>
<dbReference type="InterPro" id="IPR003826">
    <property type="entry name" value="AdoMetDC_fam_prok"/>
</dbReference>
<dbReference type="InterPro" id="IPR016067">
    <property type="entry name" value="S-AdoMet_deCO2ase_core"/>
</dbReference>
<dbReference type="InterPro" id="IPR017716">
    <property type="entry name" value="S-AdoMet_deCOase_pro-enz"/>
</dbReference>
<dbReference type="NCBIfam" id="TIGR03330">
    <property type="entry name" value="SAM_DCase_Bsu"/>
    <property type="match status" value="1"/>
</dbReference>
<dbReference type="PANTHER" id="PTHR33866">
    <property type="entry name" value="S-ADENOSYLMETHIONINE DECARBOXYLASE PROENZYME"/>
    <property type="match status" value="1"/>
</dbReference>
<dbReference type="PANTHER" id="PTHR33866:SF2">
    <property type="entry name" value="S-ADENOSYLMETHIONINE DECARBOXYLASE PROENZYME"/>
    <property type="match status" value="1"/>
</dbReference>
<dbReference type="Pfam" id="PF02675">
    <property type="entry name" value="AdoMet_dc"/>
    <property type="match status" value="1"/>
</dbReference>
<dbReference type="SUPFAM" id="SSF56276">
    <property type="entry name" value="S-adenosylmethionine decarboxylase"/>
    <property type="match status" value="1"/>
</dbReference>
<keyword id="KW-0068">Autocatalytic cleavage</keyword>
<keyword id="KW-0210">Decarboxylase</keyword>
<keyword id="KW-0456">Lyase</keyword>
<keyword id="KW-0620">Polyamine biosynthesis</keyword>
<keyword id="KW-0670">Pyruvate</keyword>
<keyword id="KW-0949">S-adenosyl-L-methionine</keyword>
<keyword id="KW-0704">Schiff base</keyword>
<keyword id="KW-0745">Spermidine biosynthesis</keyword>
<keyword id="KW-0865">Zymogen</keyword>
<accession>B7V1I5</accession>
<feature type="chain" id="PRO_1000193197" description="S-adenosylmethionine decarboxylase beta chain" evidence="1">
    <location>
        <begin position="1"/>
        <end position="72"/>
    </location>
</feature>
<feature type="chain" id="PRO_1000193198" description="S-adenosylmethionine decarboxylase alpha chain" evidence="1">
    <location>
        <begin position="73"/>
        <end position="160"/>
    </location>
</feature>
<feature type="active site" description="Schiff-base intermediate with substrate; via pyruvic acid" evidence="1">
    <location>
        <position position="73"/>
    </location>
</feature>
<feature type="active site" description="Proton acceptor; for processing activity" evidence="1">
    <location>
        <position position="78"/>
    </location>
</feature>
<feature type="active site" description="Proton donor; for catalytic activity" evidence="1">
    <location>
        <position position="93"/>
    </location>
</feature>
<feature type="site" description="Cleavage (non-hydrolytic); by autolysis" evidence="1">
    <location>
        <begin position="72"/>
        <end position="73"/>
    </location>
</feature>
<feature type="modified residue" description="Pyruvic acid (Ser); by autocatalysis" evidence="1">
    <location>
        <position position="73"/>
    </location>
</feature>
<evidence type="ECO:0000255" key="1">
    <source>
        <dbReference type="HAMAP-Rule" id="MF_00464"/>
    </source>
</evidence>
<proteinExistence type="inferred from homology"/>